<proteinExistence type="inferred from homology"/>
<organism>
    <name type="scientific">Campylobacter jejuni subsp. jejuni serotype O:2 (strain ATCC 700819 / NCTC 11168)</name>
    <dbReference type="NCBI Taxonomy" id="192222"/>
    <lineage>
        <taxon>Bacteria</taxon>
        <taxon>Pseudomonadati</taxon>
        <taxon>Campylobacterota</taxon>
        <taxon>Epsilonproteobacteria</taxon>
        <taxon>Campylobacterales</taxon>
        <taxon>Campylobacteraceae</taxon>
        <taxon>Campylobacter</taxon>
    </lineage>
</organism>
<reference key="1">
    <citation type="journal article" date="2000" name="Nature">
        <title>The genome sequence of the food-borne pathogen Campylobacter jejuni reveals hypervariable sequences.</title>
        <authorList>
            <person name="Parkhill J."/>
            <person name="Wren B.W."/>
            <person name="Mungall K.L."/>
            <person name="Ketley J.M."/>
            <person name="Churcher C.M."/>
            <person name="Basham D."/>
            <person name="Chillingworth T."/>
            <person name="Davies R.M."/>
            <person name="Feltwell T."/>
            <person name="Holroyd S."/>
            <person name="Jagels K."/>
            <person name="Karlyshev A.V."/>
            <person name="Moule S."/>
            <person name="Pallen M.J."/>
            <person name="Penn C.W."/>
            <person name="Quail M.A."/>
            <person name="Rajandream M.A."/>
            <person name="Rutherford K.M."/>
            <person name="van Vliet A.H.M."/>
            <person name="Whitehead S."/>
            <person name="Barrell B.G."/>
        </authorList>
    </citation>
    <scope>NUCLEOTIDE SEQUENCE [LARGE SCALE GENOMIC DNA]</scope>
    <source>
        <strain>ATCC 700819 / NCTC 11168</strain>
    </source>
</reference>
<protein>
    <recommendedName>
        <fullName evidence="1">tRNA-2-methylthio-N(6)-dimethylallyladenosine synthase</fullName>
        <ecNumber evidence="1">2.8.4.3</ecNumber>
    </recommendedName>
    <alternativeName>
        <fullName evidence="1">(Dimethylallyl)adenosine tRNA methylthiotransferase MiaB</fullName>
    </alternativeName>
    <alternativeName>
        <fullName evidence="1">tRNA-i(6)A37 methylthiotransferase</fullName>
    </alternativeName>
</protein>
<sequence>MSAKKLFIQTLGCAMNVRDSEHMIAELTQKENYALTEDIKEADLILINTCSVREKPVHKLFSEVGGFEKVKKEGAKIGVCGCTASHLGNEIFKRAPYVDFVLGARNISKITQAIKTPKFMGVDIDYDESEFAFADFRNSIYKSYINISIGCDKHCTYCIVPHTRGDEISIPFNIIYKEAQKAIEKGAKEIFLLGQNVNNYGKRFRNEHKKMDFSDLLEELSTIEGLERIRFTSPHPLHMDDKFLEVFANNPKVCKSMHMPLQSGSSEILKAMKRGYTKEWYLNRALKLRELCPNVSISTDIIVAFPGESEKDFEETVDVLEKVRFEQIFSFKYSKRPLTKAATMPNQIDEEIASRRLSTLQNRHSEILDKIVKKQENKTFKVLFEELRAGNSIAGRTDNNFLVQVEGSEELLGQFKEVKITNAKRMVLYGEIV</sequence>
<feature type="chain" id="PRO_0000374198" description="tRNA-2-methylthio-N(6)-dimethylallyladenosine synthase">
    <location>
        <begin position="1"/>
        <end position="433"/>
    </location>
</feature>
<feature type="domain" description="MTTase N-terminal" evidence="1">
    <location>
        <begin position="4"/>
        <end position="119"/>
    </location>
</feature>
<feature type="domain" description="Radical SAM core" evidence="2">
    <location>
        <begin position="137"/>
        <end position="370"/>
    </location>
</feature>
<feature type="domain" description="TRAM" evidence="1">
    <location>
        <begin position="373"/>
        <end position="433"/>
    </location>
</feature>
<feature type="binding site" evidence="1">
    <location>
        <position position="13"/>
    </location>
    <ligand>
        <name>[4Fe-4S] cluster</name>
        <dbReference type="ChEBI" id="CHEBI:49883"/>
        <label>1</label>
    </ligand>
</feature>
<feature type="binding site" evidence="1">
    <location>
        <position position="50"/>
    </location>
    <ligand>
        <name>[4Fe-4S] cluster</name>
        <dbReference type="ChEBI" id="CHEBI:49883"/>
        <label>1</label>
    </ligand>
</feature>
<feature type="binding site" evidence="1">
    <location>
        <position position="82"/>
    </location>
    <ligand>
        <name>[4Fe-4S] cluster</name>
        <dbReference type="ChEBI" id="CHEBI:49883"/>
        <label>1</label>
    </ligand>
</feature>
<feature type="binding site" evidence="1">
    <location>
        <position position="151"/>
    </location>
    <ligand>
        <name>[4Fe-4S] cluster</name>
        <dbReference type="ChEBI" id="CHEBI:49883"/>
        <label>2</label>
        <note>4Fe-4S-S-AdoMet</note>
    </ligand>
</feature>
<feature type="binding site" evidence="1">
    <location>
        <position position="155"/>
    </location>
    <ligand>
        <name>[4Fe-4S] cluster</name>
        <dbReference type="ChEBI" id="CHEBI:49883"/>
        <label>2</label>
        <note>4Fe-4S-S-AdoMet</note>
    </ligand>
</feature>
<feature type="binding site" evidence="1">
    <location>
        <position position="158"/>
    </location>
    <ligand>
        <name>[4Fe-4S] cluster</name>
        <dbReference type="ChEBI" id="CHEBI:49883"/>
        <label>2</label>
        <note>4Fe-4S-S-AdoMet</note>
    </ligand>
</feature>
<evidence type="ECO:0000255" key="1">
    <source>
        <dbReference type="HAMAP-Rule" id="MF_01864"/>
    </source>
</evidence>
<evidence type="ECO:0000255" key="2">
    <source>
        <dbReference type="PROSITE-ProRule" id="PRU01266"/>
    </source>
</evidence>
<accession>Q0PB55</accession>
<name>MIAB_CAMJE</name>
<gene>
    <name evidence="1" type="primary">miaB</name>
    <name type="ordered locus">Cj0458c</name>
</gene>
<comment type="function">
    <text evidence="1">Catalyzes the methylthiolation of N6-(dimethylallyl)adenosine (i(6)A), leading to the formation of 2-methylthio-N6-(dimethylallyl)adenosine (ms(2)i(6)A) at position 37 in tRNAs that read codons beginning with uridine.</text>
</comment>
<comment type="catalytic activity">
    <reaction evidence="1">
        <text>N(6)-dimethylallyladenosine(37) in tRNA + (sulfur carrier)-SH + AH2 + 2 S-adenosyl-L-methionine = 2-methylsulfanyl-N(6)-dimethylallyladenosine(37) in tRNA + (sulfur carrier)-H + 5'-deoxyadenosine + L-methionine + A + S-adenosyl-L-homocysteine + 2 H(+)</text>
        <dbReference type="Rhea" id="RHEA:37067"/>
        <dbReference type="Rhea" id="RHEA-COMP:10375"/>
        <dbReference type="Rhea" id="RHEA-COMP:10376"/>
        <dbReference type="Rhea" id="RHEA-COMP:14737"/>
        <dbReference type="Rhea" id="RHEA-COMP:14739"/>
        <dbReference type="ChEBI" id="CHEBI:13193"/>
        <dbReference type="ChEBI" id="CHEBI:15378"/>
        <dbReference type="ChEBI" id="CHEBI:17319"/>
        <dbReference type="ChEBI" id="CHEBI:17499"/>
        <dbReference type="ChEBI" id="CHEBI:29917"/>
        <dbReference type="ChEBI" id="CHEBI:57844"/>
        <dbReference type="ChEBI" id="CHEBI:57856"/>
        <dbReference type="ChEBI" id="CHEBI:59789"/>
        <dbReference type="ChEBI" id="CHEBI:64428"/>
        <dbReference type="ChEBI" id="CHEBI:74415"/>
        <dbReference type="ChEBI" id="CHEBI:74417"/>
        <dbReference type="EC" id="2.8.4.3"/>
    </reaction>
</comment>
<comment type="cofactor">
    <cofactor evidence="1">
        <name>[4Fe-4S] cluster</name>
        <dbReference type="ChEBI" id="CHEBI:49883"/>
    </cofactor>
    <text evidence="1">Binds 2 [4Fe-4S] clusters. One cluster is coordinated with 3 cysteines and an exchangeable S-adenosyl-L-methionine.</text>
</comment>
<comment type="subunit">
    <text evidence="1">Monomer.</text>
</comment>
<comment type="subcellular location">
    <subcellularLocation>
        <location evidence="1">Cytoplasm</location>
    </subcellularLocation>
</comment>
<comment type="similarity">
    <text evidence="1">Belongs to the methylthiotransferase family. MiaB subfamily.</text>
</comment>
<dbReference type="EC" id="2.8.4.3" evidence="1"/>
<dbReference type="EMBL" id="AL111168">
    <property type="protein sequence ID" value="CAL34606.1"/>
    <property type="molecule type" value="Genomic_DNA"/>
</dbReference>
<dbReference type="PIR" id="E81390">
    <property type="entry name" value="E81390"/>
</dbReference>
<dbReference type="RefSeq" id="WP_002858634.1">
    <property type="nucleotide sequence ID" value="NZ_SZUC01000002.1"/>
</dbReference>
<dbReference type="RefSeq" id="YP_002343892.1">
    <property type="nucleotide sequence ID" value="NC_002163.1"/>
</dbReference>
<dbReference type="SMR" id="Q0PB55"/>
<dbReference type="IntAct" id="Q0PB55">
    <property type="interactions" value="2"/>
</dbReference>
<dbReference type="STRING" id="192222.Cj0458c"/>
<dbReference type="PaxDb" id="192222-Cj0458c"/>
<dbReference type="EnsemblBacteria" id="CAL34606">
    <property type="protein sequence ID" value="CAL34606"/>
    <property type="gene ID" value="Cj0458c"/>
</dbReference>
<dbReference type="GeneID" id="904781"/>
<dbReference type="KEGG" id="cje:Cj0458c"/>
<dbReference type="PATRIC" id="fig|192222.6.peg.450"/>
<dbReference type="eggNOG" id="COG0621">
    <property type="taxonomic scope" value="Bacteria"/>
</dbReference>
<dbReference type="HOGENOM" id="CLU_018697_2_0_7"/>
<dbReference type="OrthoDB" id="9805215at2"/>
<dbReference type="Proteomes" id="UP000000799">
    <property type="component" value="Chromosome"/>
</dbReference>
<dbReference type="GO" id="GO:0005829">
    <property type="term" value="C:cytosol"/>
    <property type="evidence" value="ECO:0007669"/>
    <property type="project" value="TreeGrafter"/>
</dbReference>
<dbReference type="GO" id="GO:0051539">
    <property type="term" value="F:4 iron, 4 sulfur cluster binding"/>
    <property type="evidence" value="ECO:0007669"/>
    <property type="project" value="UniProtKB-UniRule"/>
</dbReference>
<dbReference type="GO" id="GO:0046872">
    <property type="term" value="F:metal ion binding"/>
    <property type="evidence" value="ECO:0007669"/>
    <property type="project" value="UniProtKB-KW"/>
</dbReference>
<dbReference type="GO" id="GO:0035597">
    <property type="term" value="F:N6-isopentenyladenosine methylthiotransferase activity"/>
    <property type="evidence" value="ECO:0007669"/>
    <property type="project" value="TreeGrafter"/>
</dbReference>
<dbReference type="CDD" id="cd01335">
    <property type="entry name" value="Radical_SAM"/>
    <property type="match status" value="1"/>
</dbReference>
<dbReference type="FunFam" id="3.40.50.12160:FF:000003">
    <property type="entry name" value="CDK5 regulatory subunit-associated protein 1"/>
    <property type="match status" value="1"/>
</dbReference>
<dbReference type="FunFam" id="3.80.30.20:FF:000001">
    <property type="entry name" value="tRNA-2-methylthio-N(6)-dimethylallyladenosine synthase 2"/>
    <property type="match status" value="1"/>
</dbReference>
<dbReference type="Gene3D" id="3.40.50.12160">
    <property type="entry name" value="Methylthiotransferase, N-terminal domain"/>
    <property type="match status" value="1"/>
</dbReference>
<dbReference type="Gene3D" id="3.80.30.20">
    <property type="entry name" value="tm_1862 like domain"/>
    <property type="match status" value="1"/>
</dbReference>
<dbReference type="HAMAP" id="MF_01864">
    <property type="entry name" value="tRNA_metthiotr_MiaB"/>
    <property type="match status" value="1"/>
</dbReference>
<dbReference type="InterPro" id="IPR006638">
    <property type="entry name" value="Elp3/MiaA/NifB-like_rSAM"/>
</dbReference>
<dbReference type="InterPro" id="IPR005839">
    <property type="entry name" value="Methylthiotransferase"/>
</dbReference>
<dbReference type="InterPro" id="IPR020612">
    <property type="entry name" value="Methylthiotransferase_CS"/>
</dbReference>
<dbReference type="InterPro" id="IPR013848">
    <property type="entry name" value="Methylthiotransferase_N"/>
</dbReference>
<dbReference type="InterPro" id="IPR038135">
    <property type="entry name" value="Methylthiotransferase_N_sf"/>
</dbReference>
<dbReference type="InterPro" id="IPR006463">
    <property type="entry name" value="MiaB_methiolase"/>
</dbReference>
<dbReference type="InterPro" id="IPR007197">
    <property type="entry name" value="rSAM"/>
</dbReference>
<dbReference type="InterPro" id="IPR023404">
    <property type="entry name" value="rSAM_horseshoe"/>
</dbReference>
<dbReference type="InterPro" id="IPR002792">
    <property type="entry name" value="TRAM_dom"/>
</dbReference>
<dbReference type="NCBIfam" id="TIGR01574">
    <property type="entry name" value="miaB-methiolase"/>
    <property type="match status" value="1"/>
</dbReference>
<dbReference type="NCBIfam" id="TIGR00089">
    <property type="entry name" value="MiaB/RimO family radical SAM methylthiotransferase"/>
    <property type="match status" value="1"/>
</dbReference>
<dbReference type="PANTHER" id="PTHR43020">
    <property type="entry name" value="CDK5 REGULATORY SUBUNIT-ASSOCIATED PROTEIN 1"/>
    <property type="match status" value="1"/>
</dbReference>
<dbReference type="PANTHER" id="PTHR43020:SF2">
    <property type="entry name" value="MITOCHONDRIAL TRNA METHYLTHIOTRANSFERASE CDK5RAP1"/>
    <property type="match status" value="1"/>
</dbReference>
<dbReference type="Pfam" id="PF04055">
    <property type="entry name" value="Radical_SAM"/>
    <property type="match status" value="1"/>
</dbReference>
<dbReference type="Pfam" id="PF01938">
    <property type="entry name" value="TRAM"/>
    <property type="match status" value="1"/>
</dbReference>
<dbReference type="Pfam" id="PF00919">
    <property type="entry name" value="UPF0004"/>
    <property type="match status" value="1"/>
</dbReference>
<dbReference type="SFLD" id="SFLDF00273">
    <property type="entry name" value="(dimethylallyl)adenosine_tRNA"/>
    <property type="match status" value="1"/>
</dbReference>
<dbReference type="SFLD" id="SFLDG01082">
    <property type="entry name" value="B12-binding_domain_containing"/>
    <property type="match status" value="1"/>
</dbReference>
<dbReference type="SFLD" id="SFLDG01061">
    <property type="entry name" value="methylthiotransferase"/>
    <property type="match status" value="1"/>
</dbReference>
<dbReference type="SMART" id="SM00729">
    <property type="entry name" value="Elp3"/>
    <property type="match status" value="1"/>
</dbReference>
<dbReference type="SUPFAM" id="SSF102114">
    <property type="entry name" value="Radical SAM enzymes"/>
    <property type="match status" value="1"/>
</dbReference>
<dbReference type="PROSITE" id="PS51449">
    <property type="entry name" value="MTTASE_N"/>
    <property type="match status" value="1"/>
</dbReference>
<dbReference type="PROSITE" id="PS01278">
    <property type="entry name" value="MTTASE_RADICAL"/>
    <property type="match status" value="1"/>
</dbReference>
<dbReference type="PROSITE" id="PS51918">
    <property type="entry name" value="RADICAL_SAM"/>
    <property type="match status" value="1"/>
</dbReference>
<dbReference type="PROSITE" id="PS50926">
    <property type="entry name" value="TRAM"/>
    <property type="match status" value="1"/>
</dbReference>
<keyword id="KW-0004">4Fe-4S</keyword>
<keyword id="KW-0963">Cytoplasm</keyword>
<keyword id="KW-0408">Iron</keyword>
<keyword id="KW-0411">Iron-sulfur</keyword>
<keyword id="KW-0479">Metal-binding</keyword>
<keyword id="KW-1185">Reference proteome</keyword>
<keyword id="KW-0949">S-adenosyl-L-methionine</keyword>
<keyword id="KW-0808">Transferase</keyword>
<keyword id="KW-0819">tRNA processing</keyword>